<accession>Q9FNP9</accession>
<comment type="function">
    <text evidence="3">Involved in the biosynthesis of hydroxycinnamic acid amides, which play a role in defense against pathogens. Agmatine is the preferred acyl acceptor, lower activity is observed towards putrescine. The preferred acyl donor is p-coumaroyl-CoA, lower activity is seen towards feruloyl-CoA.</text>
</comment>
<comment type="catalytic activity">
    <reaction evidence="3">
        <text>4-coumaroyl-CoA + agmatine = N-(4-guanidinobutyl)-4-hydroxycinnamamide + CoA + H(+)</text>
        <dbReference type="Rhea" id="RHEA:13405"/>
        <dbReference type="ChEBI" id="CHEBI:15378"/>
        <dbReference type="ChEBI" id="CHEBI:57287"/>
        <dbReference type="ChEBI" id="CHEBI:57355"/>
        <dbReference type="ChEBI" id="CHEBI:58145"/>
        <dbReference type="ChEBI" id="CHEBI:58644"/>
        <dbReference type="EC" id="2.3.1.64"/>
    </reaction>
</comment>
<comment type="disruption phenotype">
    <text evidence="3">Increased susceptibility to A.brassicicola infection.</text>
</comment>
<comment type="similarity">
    <text evidence="1">Belongs to the plant acyltransferase family.</text>
</comment>
<proteinExistence type="evidence at protein level"/>
<name>AGCT_ARATH</name>
<evidence type="ECO:0000255" key="1"/>
<evidence type="ECO:0000269" key="2">
    <source>
    </source>
</evidence>
<evidence type="ECO:0000269" key="3">
    <source>
    </source>
</evidence>
<evidence type="ECO:0000303" key="4">
    <source>
    </source>
</evidence>
<evidence type="ECO:0000305" key="5"/>
<evidence type="ECO:0000312" key="6">
    <source>
        <dbReference type="EMBL" id="AAK59784.1"/>
    </source>
</evidence>
<gene>
    <name evidence="4" type="primary">ACT</name>
    <name type="ordered locus">At5g61160</name>
    <name type="ORF">MAF19.17</name>
</gene>
<keyword id="KW-0012">Acyltransferase</keyword>
<keyword id="KW-1185">Reference proteome</keyword>
<keyword id="KW-0808">Transferase</keyword>
<protein>
    <recommendedName>
        <fullName evidence="4">Agmatine coumaroyltransferase</fullName>
        <ecNumber>2.3.1.64</ecNumber>
    </recommendedName>
</protein>
<dbReference type="EC" id="2.3.1.64"/>
<dbReference type="EMBL" id="AB006696">
    <property type="protein sequence ID" value="BAB10378.1"/>
    <property type="molecule type" value="Genomic_DNA"/>
</dbReference>
<dbReference type="EMBL" id="CP002688">
    <property type="protein sequence ID" value="AED97429.1"/>
    <property type="molecule type" value="Genomic_DNA"/>
</dbReference>
<dbReference type="EMBL" id="AY037199">
    <property type="protein sequence ID" value="AAK59784.1"/>
    <property type="molecule type" value="mRNA"/>
</dbReference>
<dbReference type="EMBL" id="AY133543">
    <property type="protein sequence ID" value="AAM91373.1"/>
    <property type="molecule type" value="mRNA"/>
</dbReference>
<dbReference type="SMR" id="Q9FNP9"/>
<dbReference type="STRING" id="3702.Q9FNP9"/>
<dbReference type="PaxDb" id="3702-AT5G61160.1"/>
<dbReference type="ProteomicsDB" id="244739"/>
<dbReference type="DNASU" id="836237"/>
<dbReference type="EnsemblPlants" id="AT5G61160.1">
    <property type="protein sequence ID" value="AT5G61160.1"/>
    <property type="gene ID" value="AT5G61160"/>
</dbReference>
<dbReference type="GeneID" id="836237"/>
<dbReference type="Gramene" id="AT5G61160.1">
    <property type="protein sequence ID" value="AT5G61160.1"/>
    <property type="gene ID" value="AT5G61160"/>
</dbReference>
<dbReference type="KEGG" id="ath:AT5G61160"/>
<dbReference type="Araport" id="AT5G61160"/>
<dbReference type="TAIR" id="AT5G61160">
    <property type="gene designation" value="AACT1"/>
</dbReference>
<dbReference type="eggNOG" id="ENOG502QPXT">
    <property type="taxonomic scope" value="Eukaryota"/>
</dbReference>
<dbReference type="HOGENOM" id="CLU_014546_7_0_1"/>
<dbReference type="InParanoid" id="Q9FNP9"/>
<dbReference type="OMA" id="EYKAKMF"/>
<dbReference type="PhylomeDB" id="Q9FNP9"/>
<dbReference type="BioCyc" id="ARA:AT5G61160-MONOMER"/>
<dbReference type="BRENDA" id="2.3.1.64">
    <property type="organism ID" value="399"/>
</dbReference>
<dbReference type="PRO" id="PR:Q9FNP9"/>
<dbReference type="Proteomes" id="UP000006548">
    <property type="component" value="Chromosome 5"/>
</dbReference>
<dbReference type="ExpressionAtlas" id="Q9FNP9">
    <property type="expression patterns" value="baseline and differential"/>
</dbReference>
<dbReference type="GO" id="GO:0047634">
    <property type="term" value="F:agmatine N4-coumaroyltransferase activity"/>
    <property type="evidence" value="ECO:0000314"/>
    <property type="project" value="UniProtKB"/>
</dbReference>
<dbReference type="FunFam" id="3.30.559.10:FF:000035">
    <property type="entry name" value="Phenolic glucoside malonyltransferase 1"/>
    <property type="match status" value="1"/>
</dbReference>
<dbReference type="Gene3D" id="3.30.559.10">
    <property type="entry name" value="Chloramphenicol acetyltransferase-like domain"/>
    <property type="match status" value="2"/>
</dbReference>
<dbReference type="InterPro" id="IPR023213">
    <property type="entry name" value="CAT-like_dom_sf"/>
</dbReference>
<dbReference type="InterPro" id="IPR051504">
    <property type="entry name" value="Plant_metabolite_acyltrans"/>
</dbReference>
<dbReference type="PANTHER" id="PTHR31625">
    <property type="match status" value="1"/>
</dbReference>
<dbReference type="Pfam" id="PF02458">
    <property type="entry name" value="Transferase"/>
    <property type="match status" value="1"/>
</dbReference>
<dbReference type="SUPFAM" id="SSF52777">
    <property type="entry name" value="CoA-dependent acyltransferases"/>
    <property type="match status" value="1"/>
</dbReference>
<organism>
    <name type="scientific">Arabidopsis thaliana</name>
    <name type="common">Mouse-ear cress</name>
    <dbReference type="NCBI Taxonomy" id="3702"/>
    <lineage>
        <taxon>Eukaryota</taxon>
        <taxon>Viridiplantae</taxon>
        <taxon>Streptophyta</taxon>
        <taxon>Embryophyta</taxon>
        <taxon>Tracheophyta</taxon>
        <taxon>Spermatophyta</taxon>
        <taxon>Magnoliopsida</taxon>
        <taxon>eudicotyledons</taxon>
        <taxon>Gunneridae</taxon>
        <taxon>Pentapetalae</taxon>
        <taxon>rosids</taxon>
        <taxon>malvids</taxon>
        <taxon>Brassicales</taxon>
        <taxon>Brassicaceae</taxon>
        <taxon>Camelineae</taxon>
        <taxon>Arabidopsis</taxon>
    </lineage>
</organism>
<reference key="1">
    <citation type="journal article" date="1997" name="DNA Res.">
        <title>Structural analysis of Arabidopsis thaliana chromosome 5. II. Sequence features of the regions of 1,044,062 bp covered by thirteen physically assigned P1 clones.</title>
        <authorList>
            <person name="Kotani H."/>
            <person name="Nakamura Y."/>
            <person name="Sato S."/>
            <person name="Kaneko T."/>
            <person name="Asamizu E."/>
            <person name="Miyajima N."/>
            <person name="Tabata S."/>
        </authorList>
    </citation>
    <scope>NUCLEOTIDE SEQUENCE [LARGE SCALE GENOMIC DNA]</scope>
    <source>
        <strain>cv. Columbia</strain>
    </source>
</reference>
<reference key="2">
    <citation type="journal article" date="2017" name="Plant J.">
        <title>Araport11: a complete reannotation of the Arabidopsis thaliana reference genome.</title>
        <authorList>
            <person name="Cheng C.Y."/>
            <person name="Krishnakumar V."/>
            <person name="Chan A.P."/>
            <person name="Thibaud-Nissen F."/>
            <person name="Schobel S."/>
            <person name="Town C.D."/>
        </authorList>
    </citation>
    <scope>GENOME REANNOTATION</scope>
    <source>
        <strain>cv. Columbia</strain>
    </source>
</reference>
<reference evidence="5 6" key="3">
    <citation type="journal article" date="2003" name="Science">
        <title>Empirical analysis of transcriptional activity in the Arabidopsis genome.</title>
        <authorList>
            <person name="Yamada K."/>
            <person name="Lim J."/>
            <person name="Dale J.M."/>
            <person name="Chen H."/>
            <person name="Shinn P."/>
            <person name="Palm C.J."/>
            <person name="Southwick A.M."/>
            <person name="Wu H.C."/>
            <person name="Kim C.J."/>
            <person name="Nguyen M."/>
            <person name="Pham P.K."/>
            <person name="Cheuk R.F."/>
            <person name="Karlin-Newmann G."/>
            <person name="Liu S.X."/>
            <person name="Lam B."/>
            <person name="Sakano H."/>
            <person name="Wu T."/>
            <person name="Yu G."/>
            <person name="Miranda M."/>
            <person name="Quach H.L."/>
            <person name="Tripp M."/>
            <person name="Chang C.H."/>
            <person name="Lee J.M."/>
            <person name="Toriumi M.J."/>
            <person name="Chan M.M."/>
            <person name="Tang C.C."/>
            <person name="Onodera C.S."/>
            <person name="Deng J.M."/>
            <person name="Akiyama K."/>
            <person name="Ansari Y."/>
            <person name="Arakawa T."/>
            <person name="Banh J."/>
            <person name="Banno F."/>
            <person name="Bowser L."/>
            <person name="Brooks S.Y."/>
            <person name="Carninci P."/>
            <person name="Chao Q."/>
            <person name="Choy N."/>
            <person name="Enju A."/>
            <person name="Goldsmith A.D."/>
            <person name="Gurjal M."/>
            <person name="Hansen N.F."/>
            <person name="Hayashizaki Y."/>
            <person name="Johnson-Hopson C."/>
            <person name="Hsuan V.W."/>
            <person name="Iida K."/>
            <person name="Karnes M."/>
            <person name="Khan S."/>
            <person name="Koesema E."/>
            <person name="Ishida J."/>
            <person name="Jiang P.X."/>
            <person name="Jones T."/>
            <person name="Kawai J."/>
            <person name="Kamiya A."/>
            <person name="Meyers C."/>
            <person name="Nakajima M."/>
            <person name="Narusaka M."/>
            <person name="Seki M."/>
            <person name="Sakurai T."/>
            <person name="Satou M."/>
            <person name="Tamse R."/>
            <person name="Vaysberg M."/>
            <person name="Wallender E.K."/>
            <person name="Wong C."/>
            <person name="Yamamura Y."/>
            <person name="Yuan S."/>
            <person name="Shinozaki K."/>
            <person name="Davis R.W."/>
            <person name="Theologis A."/>
            <person name="Ecker J.R."/>
        </authorList>
    </citation>
    <scope>NUCLEOTIDE SEQUENCE [LARGE SCALE MRNA]</scope>
    <source>
        <strain evidence="2">cv. Columbia</strain>
    </source>
</reference>
<reference evidence="5" key="4">
    <citation type="journal article" date="2009" name="Planta">
        <title>Accumulation of hydroxycinnamic acid amides induced by pathogen infection and identification of agmatine coumaroyltransferase in Arabidopsis thaliana.</title>
        <authorList>
            <person name="Muroi A."/>
            <person name="Ishihara A."/>
            <person name="Tanaka C."/>
            <person name="Ishizuka A."/>
            <person name="Takabayashi J."/>
            <person name="Miyoshi H."/>
            <person name="Nishioka T."/>
        </authorList>
    </citation>
    <scope>IDENTIFICATION</scope>
    <scope>FUNCTION</scope>
    <scope>CATALYTIC ACTIVITY</scope>
    <scope>DISRUPTION PHENOTYPE</scope>
    <source>
        <strain evidence="3">cv. Columbia</strain>
    </source>
</reference>
<sequence>MALKVIKISRVSPATASVDPLIVPLSFFDLQWLKLNPTEQVFFYKLTESSSSRDVFYSSILPKLERSLSLILTHFRLFTGHLKWDSQDPKPHLVVLSGDTLSLTVAETDADFSRISGRGLRPELELRPLIPELPIYSDSGAVVSLQVTLFPKQGFCIGTTAHHVVLDGKTAEKFNKAWAHTCKHGTIPKILPTVLDRSVVNVPAGLEQKMLELLPYLTEDDKENGRTLKLPPVKEINAKDNVLRITIEISPENIEKLKERAKKESTRAELHLSTFVVTFAHVWTCMVKARSGDPNRPVRFMYAADFRNRLEPPVPVTYFGTCVLAMDFYKYKAKEFMGEDGFVNTVEILSDSVKRLASQGVESTWKVYEEGTKTMKWGTQLLVVNGSNQIGMYETDFGWGRPIHTETMSIYKNDEFSMSKRRDGIGGVEIGISLKKLEMDTFLSLFYKWIGN</sequence>
<feature type="chain" id="PRO_0000405009" description="Agmatine coumaroyltransferase">
    <location>
        <begin position="1"/>
        <end position="452"/>
    </location>
</feature>
<feature type="active site" description="Proton acceptor" evidence="1">
    <location>
        <position position="163"/>
    </location>
</feature>
<feature type="active site" description="Proton acceptor" evidence="1">
    <location>
        <position position="396"/>
    </location>
</feature>